<sequence>MGWLFLKVLLVGMAFSGFFYPLVDFSISGKTRAPQPNIVIILADDMGWGDLGANWAETKDTTNLDKMASEGMRFVDFHAAASTCSPSRASLLTGRLGLRNGVTHNFAVTSVGGLPVNETTLAEVLRQEGYVTAMIGKWHLGHHGSYHPNFRGFDYYFGIPYSNDMGCTDAPGYNYPPCPACPQRDGLWRNPGRDCYTDVALPLYENLNIVEQPVNLSGLAQKYAERAVEFIEQASTSGRPFLLYVGLAHMHVPLSVTPPLAHPQRQSLYRASLREMDSLVGQIKDKVDHVARENTLLWFTGDNGPWAQKCELAGSVGPFFGLWQTHQGGSPTKQTTWEGGHRVPALAYWPGRVPANVTSTALLSLLDIFPTVIALAGASLPPNRKFDGRDVSEVLFGKSQMGHRVLFHPNSGAAGEYGALQTVRLNHYKAFYITGGAKACDGSVGPEQHHVAPLIFNLEDAADEGMPLQKGSPEYQEVLQQVTRALADVLQDIADDNSSRADYTQDPSVIPCCNPYQTTCRCQPV</sequence>
<proteinExistence type="evidence at protein level"/>
<comment type="function">
    <text evidence="3 4">Displays arylsulfatase activity at acidic pH towards the artificial substrate p-nitrocatechol sulfate (PubMed:25135642). Catalyzes the hydrolysis of the 3-sulfate groups of the N-sulfo-D-glucosamine 3-O-sulfate units of heparin (PubMed:22689975).</text>
</comment>
<comment type="catalytic activity">
    <reaction evidence="4">
        <text>an aryl sulfate + H2O = a phenol + sulfate + H(+)</text>
        <dbReference type="Rhea" id="RHEA:17261"/>
        <dbReference type="ChEBI" id="CHEBI:15377"/>
        <dbReference type="ChEBI" id="CHEBI:15378"/>
        <dbReference type="ChEBI" id="CHEBI:16189"/>
        <dbReference type="ChEBI" id="CHEBI:33853"/>
        <dbReference type="ChEBI" id="CHEBI:140317"/>
        <dbReference type="EC" id="3.1.6.1"/>
    </reaction>
</comment>
<comment type="catalytic activity">
    <reaction evidence="3">
        <text>Hydrolysis of the 3-sulfate groups of the N-sulfo-D-glucosamine 3-O-sulfate units of heparin.</text>
        <dbReference type="EC" id="3.1.6.15"/>
    </reaction>
</comment>
<comment type="cofactor">
    <cofactor evidence="1">
        <name>Ca(2+)</name>
        <dbReference type="ChEBI" id="CHEBI:29108"/>
    </cofactor>
    <text evidence="1">Binds 1 Ca(2+) ion per subunit.</text>
</comment>
<comment type="subcellular location">
    <subcellularLocation>
        <location evidence="4">Lysosome</location>
    </subcellularLocation>
    <text evidence="4">The 63-kDa precursor protein localizes to pre-lysosomal compartments and tightly associates with organelle membranes, most likely the endoplasmic reticulum. In contrast, proteolytically processed fragments of 34-, 18- and 10-kDa are found in lysosomal fractions and lose their membrane association.</text>
</comment>
<comment type="alternative products">
    <event type="alternative splicing"/>
    <isoform>
        <id>Q3TYD4-1</id>
        <name>1</name>
        <sequence type="displayed"/>
    </isoform>
    <isoform>
        <id>Q3TYD4-2</id>
        <name>2</name>
        <sequence type="described" ref="VSP_018628 VSP_018629"/>
    </isoform>
</comment>
<comment type="tissue specificity">
    <text evidence="4">Highly expressed in the spleen, kidney, liver, brain, and testis (at protein level).</text>
</comment>
<comment type="PTM">
    <text evidence="4">N-glycosylated with both high mannose and complex type sugars.</text>
</comment>
<comment type="PTM">
    <text evidence="1">The conversion to 3-oxoalanine (also known as C-formylglycine, FGly), of a serine or cysteine residue in prokaryotes and of a cysteine residue in eukaryotes, is critical for catalytic activity.</text>
</comment>
<comment type="PTM">
    <text evidence="4">The 63-kDa precursor undergoes proteolytic processing in two steps, yielding two fragments in the first step (apparent molecular masses of 44 and 18 kDa). In the second step, the 44-kDa fragment is processed further to the 34- and 10-kDa chains. The 10-kDa chain is a cleavage product of the 44-kDa fragment but linked to the 18-kDa chain through a disulfide bridge.</text>
</comment>
<comment type="disruption phenotype">
    <text evidence="3">Mice accumulate heparan sulfate in visceral organs and the central nervous system and develop neuronal cell death and behavioral deficits (PubMed:22689975). This accumulated heparan sulfate exhibits unique non-reducing end structures with terminal N-sulfoglucosamine-3-O-sulfate residues (PubMed:22689975).</text>
</comment>
<comment type="similarity">
    <text evidence="6">Belongs to the sulfatase family.</text>
</comment>
<keyword id="KW-0025">Alternative splicing</keyword>
<keyword id="KW-0106">Calcium</keyword>
<keyword id="KW-1015">Disulfide bond</keyword>
<keyword id="KW-0325">Glycoprotein</keyword>
<keyword id="KW-0378">Hydrolase</keyword>
<keyword id="KW-0458">Lysosome</keyword>
<keyword id="KW-0479">Metal-binding</keyword>
<keyword id="KW-1185">Reference proteome</keyword>
<keyword id="KW-0732">Signal</keyword>
<organism>
    <name type="scientific">Mus musculus</name>
    <name type="common">Mouse</name>
    <dbReference type="NCBI Taxonomy" id="10090"/>
    <lineage>
        <taxon>Eukaryota</taxon>
        <taxon>Metazoa</taxon>
        <taxon>Chordata</taxon>
        <taxon>Craniata</taxon>
        <taxon>Vertebrata</taxon>
        <taxon>Euteleostomi</taxon>
        <taxon>Mammalia</taxon>
        <taxon>Eutheria</taxon>
        <taxon>Euarchontoglires</taxon>
        <taxon>Glires</taxon>
        <taxon>Rodentia</taxon>
        <taxon>Myomorpha</taxon>
        <taxon>Muroidea</taxon>
        <taxon>Muridae</taxon>
        <taxon>Murinae</taxon>
        <taxon>Mus</taxon>
        <taxon>Mus</taxon>
    </lineage>
</organism>
<name>ARSG_MOUSE</name>
<feature type="signal peptide" evidence="2">
    <location>
        <begin position="1"/>
        <end position="16"/>
    </location>
</feature>
<feature type="chain" id="PRO_0000238663" description="Arylsulfatase G">
    <location>
        <begin position="17"/>
        <end position="525"/>
    </location>
</feature>
<feature type="active site" description="Nucleophile" evidence="1">
    <location>
        <position position="84"/>
    </location>
</feature>
<feature type="active site" evidence="1">
    <location>
        <position position="139"/>
    </location>
</feature>
<feature type="binding site" evidence="1">
    <location>
        <position position="44"/>
    </location>
    <ligand>
        <name>Ca(2+)</name>
        <dbReference type="ChEBI" id="CHEBI:29108"/>
    </ligand>
</feature>
<feature type="binding site" evidence="1">
    <location>
        <position position="45"/>
    </location>
    <ligand>
        <name>Ca(2+)</name>
        <dbReference type="ChEBI" id="CHEBI:29108"/>
    </ligand>
</feature>
<feature type="binding site" description="via 3-oxoalanine" evidence="1">
    <location>
        <position position="84"/>
    </location>
    <ligand>
        <name>Ca(2+)</name>
        <dbReference type="ChEBI" id="CHEBI:29108"/>
    </ligand>
</feature>
<feature type="binding site" evidence="1">
    <location>
        <position position="137"/>
    </location>
    <ligand>
        <name>substrate</name>
    </ligand>
</feature>
<feature type="binding site" evidence="1">
    <location>
        <position position="162"/>
    </location>
    <ligand>
        <name>substrate</name>
    </ligand>
</feature>
<feature type="binding site" evidence="1">
    <location>
        <position position="251"/>
    </location>
    <ligand>
        <name>substrate</name>
    </ligand>
</feature>
<feature type="binding site" evidence="1">
    <location>
        <position position="302"/>
    </location>
    <ligand>
        <name>Ca(2+)</name>
        <dbReference type="ChEBI" id="CHEBI:29108"/>
    </ligand>
</feature>
<feature type="binding site" evidence="1">
    <location>
        <position position="303"/>
    </location>
    <ligand>
        <name>Ca(2+)</name>
        <dbReference type="ChEBI" id="CHEBI:29108"/>
    </ligand>
</feature>
<feature type="modified residue" description="3-oxoalanine (Cys)" evidence="1">
    <location>
        <position position="84"/>
    </location>
</feature>
<feature type="glycosylation site" description="N-linked (GlcNAc...) asparagine" evidence="4">
    <location>
        <position position="117"/>
    </location>
</feature>
<feature type="glycosylation site" description="N-linked (GlcNAc...) asparagine" evidence="4">
    <location>
        <position position="215"/>
    </location>
</feature>
<feature type="glycosylation site" description="N-linked (GlcNAc...) asparagine" evidence="4">
    <location>
        <position position="356"/>
    </location>
</feature>
<feature type="glycosylation site" description="N-linked (GlcNAc...) asparagine" evidence="4">
    <location>
        <position position="497"/>
    </location>
</feature>
<feature type="splice variant" id="VSP_018628" description="In isoform 2." evidence="5">
    <location>
        <begin position="1"/>
        <end position="323"/>
    </location>
</feature>
<feature type="splice variant" id="VSP_018629" description="In isoform 2." evidence="5">
    <original>QTHQ</original>
    <variation>MIKI</variation>
    <location>
        <begin position="324"/>
        <end position="327"/>
    </location>
</feature>
<feature type="mutagenesis site" description="Faster electrophoretic migration typical of a size reduction probably due to glycosylation loss." evidence="4">
    <original>N</original>
    <variation>Q</variation>
    <location>
        <position position="117"/>
    </location>
</feature>
<feature type="mutagenesis site" description="Faster electrophoretic migration typical of a size reduction probably due to glycosylation loss." evidence="4">
    <original>N</original>
    <variation>Q</variation>
    <location>
        <position position="215"/>
    </location>
</feature>
<feature type="mutagenesis site" description="Faster electrophoretic migration typical of a size reduction probably due to glycosylation loss." evidence="4">
    <original>N</original>
    <variation>Q</variation>
    <location>
        <position position="356"/>
    </location>
</feature>
<feature type="mutagenesis site" description="Faster electrophoretic migration typical of a size reduction probably due to glycosylation loss. Abolishes proteolytic cleavage." evidence="4">
    <original>N</original>
    <variation>Q</variation>
    <location>
        <position position="497"/>
    </location>
</feature>
<feature type="sequence conflict" description="In Ref. 3; AAH84731." evidence="6" ref="3">
    <original>A</original>
    <variation>V</variation>
    <location>
        <position position="122"/>
    </location>
</feature>
<feature type="sequence conflict" description="In Ref. 1; BAB31086." evidence="6" ref="1">
    <original>L</original>
    <variation>Q</variation>
    <location>
        <position position="247"/>
    </location>
</feature>
<dbReference type="EC" id="3.1.6.1" evidence="4"/>
<dbReference type="EC" id="3.1.6.15" evidence="3"/>
<dbReference type="EMBL" id="AK018132">
    <property type="protein sequence ID" value="BAB31086.1"/>
    <property type="molecule type" value="mRNA"/>
</dbReference>
<dbReference type="EMBL" id="AK158726">
    <property type="protein sequence ID" value="BAE34629.1"/>
    <property type="molecule type" value="mRNA"/>
</dbReference>
<dbReference type="EMBL" id="AL645791">
    <property type="status" value="NOT_ANNOTATED_CDS"/>
    <property type="molecule type" value="Genomic_DNA"/>
</dbReference>
<dbReference type="EMBL" id="BC022158">
    <property type="protein sequence ID" value="AAH22158.1"/>
    <property type="molecule type" value="mRNA"/>
</dbReference>
<dbReference type="EMBL" id="BC039629">
    <property type="protein sequence ID" value="AAH39629.1"/>
    <property type="molecule type" value="mRNA"/>
</dbReference>
<dbReference type="EMBL" id="BC084731">
    <property type="protein sequence ID" value="AAH84731.1"/>
    <property type="molecule type" value="mRNA"/>
</dbReference>
<dbReference type="EMBL" id="AK173082">
    <property type="protein sequence ID" value="BAD32360.1"/>
    <property type="molecule type" value="mRNA"/>
</dbReference>
<dbReference type="EMBL" id="BN000747">
    <property type="protein sequence ID" value="CAI84993.1"/>
    <property type="molecule type" value="mRNA"/>
</dbReference>
<dbReference type="CCDS" id="CCDS25581.1">
    <molecule id="Q3TYD4-1"/>
</dbReference>
<dbReference type="CCDS" id="CCDS48971.1">
    <molecule id="Q3TYD4-2"/>
</dbReference>
<dbReference type="RefSeq" id="NP_001159649.1">
    <molecule id="Q3TYD4-2"/>
    <property type="nucleotide sequence ID" value="NM_001166177.1"/>
</dbReference>
<dbReference type="RefSeq" id="NP_001348904.1">
    <molecule id="Q3TYD4-1"/>
    <property type="nucleotide sequence ID" value="NM_001361975.1"/>
</dbReference>
<dbReference type="RefSeq" id="NP_082986.3">
    <molecule id="Q3TYD4-1"/>
    <property type="nucleotide sequence ID" value="NM_028710.3"/>
</dbReference>
<dbReference type="RefSeq" id="XP_006534411.1">
    <molecule id="Q3TYD4-1"/>
    <property type="nucleotide sequence ID" value="XM_006534348.2"/>
</dbReference>
<dbReference type="RefSeq" id="XP_006534412.1">
    <molecule id="Q3TYD4-1"/>
    <property type="nucleotide sequence ID" value="XM_006534349.4"/>
</dbReference>
<dbReference type="RefSeq" id="XP_006534413.1">
    <molecule id="Q3TYD4-1"/>
    <property type="nucleotide sequence ID" value="XM_006534350.5"/>
</dbReference>
<dbReference type="RefSeq" id="XP_017170289.1">
    <molecule id="Q3TYD4-1"/>
    <property type="nucleotide sequence ID" value="XM_017314800.3"/>
</dbReference>
<dbReference type="RefSeq" id="XP_017170290.1">
    <property type="nucleotide sequence ID" value="XM_017314801.1"/>
</dbReference>
<dbReference type="RefSeq" id="XP_030102240.1">
    <molecule id="Q3TYD4-1"/>
    <property type="nucleotide sequence ID" value="XM_030246380.2"/>
</dbReference>
<dbReference type="RefSeq" id="XP_036012927.1">
    <molecule id="Q3TYD4-1"/>
    <property type="nucleotide sequence ID" value="XM_036157034.1"/>
</dbReference>
<dbReference type="SMR" id="Q3TYD4"/>
<dbReference type="BioGRID" id="216419">
    <property type="interactions" value="1"/>
</dbReference>
<dbReference type="FunCoup" id="Q3TYD4">
    <property type="interactions" value="192"/>
</dbReference>
<dbReference type="STRING" id="10090.ENSMUSP00000020928"/>
<dbReference type="GlyConnect" id="2135">
    <property type="glycosylation" value="4 N-Linked glycans (1 site)"/>
</dbReference>
<dbReference type="GlyCosmos" id="Q3TYD4">
    <property type="glycosylation" value="4 sites, 4 glycans"/>
</dbReference>
<dbReference type="GlyGen" id="Q3TYD4">
    <property type="glycosylation" value="4 sites, 5 N-linked glycans (2 sites)"/>
</dbReference>
<dbReference type="iPTMnet" id="Q3TYD4"/>
<dbReference type="PhosphoSitePlus" id="Q3TYD4"/>
<dbReference type="jPOST" id="Q3TYD4"/>
<dbReference type="PaxDb" id="10090-ENSMUSP00000102307"/>
<dbReference type="PeptideAtlas" id="Q3TYD4"/>
<dbReference type="ProteomicsDB" id="265106">
    <molecule id="Q3TYD4-1"/>
</dbReference>
<dbReference type="ProteomicsDB" id="265107">
    <molecule id="Q3TYD4-2"/>
</dbReference>
<dbReference type="Antibodypedia" id="19259">
    <property type="antibodies" value="185 antibodies from 23 providers"/>
</dbReference>
<dbReference type="DNASU" id="74008"/>
<dbReference type="Ensembl" id="ENSMUST00000020928.13">
    <molecule id="Q3TYD4-1"/>
    <property type="protein sequence ID" value="ENSMUSP00000020928.7"/>
    <property type="gene ID" value="ENSMUSG00000020604.14"/>
</dbReference>
<dbReference type="Ensembl" id="ENSMUST00000106696.2">
    <molecule id="Q3TYD4-2"/>
    <property type="protein sequence ID" value="ENSMUSP00000102307.2"/>
    <property type="gene ID" value="ENSMUSG00000020604.14"/>
</dbReference>
<dbReference type="Ensembl" id="ENSMUST00000106697.8">
    <molecule id="Q3TYD4-1"/>
    <property type="protein sequence ID" value="ENSMUSP00000102308.2"/>
    <property type="gene ID" value="ENSMUSG00000020604.14"/>
</dbReference>
<dbReference type="GeneID" id="74008"/>
<dbReference type="KEGG" id="mmu:74008"/>
<dbReference type="UCSC" id="uc007mcn.1">
    <molecule id="Q3TYD4-1"/>
    <property type="organism name" value="mouse"/>
</dbReference>
<dbReference type="UCSC" id="uc007mcp.2">
    <molecule id="Q3TYD4-2"/>
    <property type="organism name" value="mouse"/>
</dbReference>
<dbReference type="AGR" id="MGI:1921258"/>
<dbReference type="CTD" id="22901"/>
<dbReference type="MGI" id="MGI:1921258">
    <property type="gene designation" value="Arsg"/>
</dbReference>
<dbReference type="VEuPathDB" id="HostDB:ENSMUSG00000020604"/>
<dbReference type="eggNOG" id="KOG3867">
    <property type="taxonomic scope" value="Eukaryota"/>
</dbReference>
<dbReference type="GeneTree" id="ENSGT00940000159093"/>
<dbReference type="HOGENOM" id="CLU_006332_13_6_1"/>
<dbReference type="InParanoid" id="Q3TYD4"/>
<dbReference type="OMA" id="HVACRCQ"/>
<dbReference type="OrthoDB" id="103349at2759"/>
<dbReference type="PhylomeDB" id="Q3TYD4"/>
<dbReference type="BRENDA" id="3.1.6.1">
    <property type="organism ID" value="3474"/>
</dbReference>
<dbReference type="Reactome" id="R-MMU-1663150">
    <property type="pathway name" value="The activation of arylsulfatases"/>
</dbReference>
<dbReference type="Reactome" id="R-MMU-9840310">
    <property type="pathway name" value="Glycosphingolipid catabolism"/>
</dbReference>
<dbReference type="BioGRID-ORCS" id="74008">
    <property type="hits" value="3 hits in 74 CRISPR screens"/>
</dbReference>
<dbReference type="ChiTaRS" id="Arsg">
    <property type="organism name" value="mouse"/>
</dbReference>
<dbReference type="PRO" id="PR:Q3TYD4"/>
<dbReference type="Proteomes" id="UP000000589">
    <property type="component" value="Chromosome 11"/>
</dbReference>
<dbReference type="RNAct" id="Q3TYD4">
    <property type="molecule type" value="protein"/>
</dbReference>
<dbReference type="Bgee" id="ENSMUSG00000020604">
    <property type="expression patterns" value="Expressed in lumbar subsegment of spinal cord and 156 other cell types or tissues"/>
</dbReference>
<dbReference type="GO" id="GO:0005783">
    <property type="term" value="C:endoplasmic reticulum"/>
    <property type="evidence" value="ECO:0000250"/>
    <property type="project" value="HGNC-UCL"/>
</dbReference>
<dbReference type="GO" id="GO:0005615">
    <property type="term" value="C:extracellular space"/>
    <property type="evidence" value="ECO:0007669"/>
    <property type="project" value="Ensembl"/>
</dbReference>
<dbReference type="GO" id="GO:0005764">
    <property type="term" value="C:lysosome"/>
    <property type="evidence" value="ECO:0000314"/>
    <property type="project" value="UniProtKB"/>
</dbReference>
<dbReference type="GO" id="GO:0004065">
    <property type="term" value="F:arylsulfatase activity"/>
    <property type="evidence" value="ECO:0000314"/>
    <property type="project" value="UniProtKB"/>
</dbReference>
<dbReference type="GO" id="GO:0046872">
    <property type="term" value="F:metal ion binding"/>
    <property type="evidence" value="ECO:0007669"/>
    <property type="project" value="UniProtKB-KW"/>
</dbReference>
<dbReference type="GO" id="GO:0033889">
    <property type="term" value="F:N-sulfoglucosamine-3-sulfatase activity"/>
    <property type="evidence" value="ECO:0000315"/>
    <property type="project" value="UniProtKB"/>
</dbReference>
<dbReference type="GO" id="GO:0010467">
    <property type="term" value="P:gene expression"/>
    <property type="evidence" value="ECO:0000315"/>
    <property type="project" value="MGI"/>
</dbReference>
<dbReference type="GO" id="GO:0010001">
    <property type="term" value="P:glial cell differentiation"/>
    <property type="evidence" value="ECO:0000315"/>
    <property type="project" value="MGI"/>
</dbReference>
<dbReference type="GO" id="GO:0048872">
    <property type="term" value="P:homeostasis of number of cells"/>
    <property type="evidence" value="ECO:0000315"/>
    <property type="project" value="MGI"/>
</dbReference>
<dbReference type="GO" id="GO:0007040">
    <property type="term" value="P:lysosome organization"/>
    <property type="evidence" value="ECO:0000315"/>
    <property type="project" value="MGI"/>
</dbReference>
<dbReference type="GO" id="GO:0051402">
    <property type="term" value="P:neuron apoptotic process"/>
    <property type="evidence" value="ECO:0000315"/>
    <property type="project" value="MGI"/>
</dbReference>
<dbReference type="GO" id="GO:0060041">
    <property type="term" value="P:retina development in camera-type eye"/>
    <property type="evidence" value="ECO:0000315"/>
    <property type="project" value="MGI"/>
</dbReference>
<dbReference type="GO" id="GO:0006790">
    <property type="term" value="P:sulfur compound metabolic process"/>
    <property type="evidence" value="ECO:0007669"/>
    <property type="project" value="Ensembl"/>
</dbReference>
<dbReference type="CDD" id="cd16161">
    <property type="entry name" value="ARSG"/>
    <property type="match status" value="1"/>
</dbReference>
<dbReference type="FunFam" id="3.30.1120.10:FF:000006">
    <property type="entry name" value="Arylsulfatase G"/>
    <property type="match status" value="1"/>
</dbReference>
<dbReference type="FunFam" id="3.40.720.10:FF:000031">
    <property type="entry name" value="arylsulfatase G isoform X1"/>
    <property type="match status" value="1"/>
</dbReference>
<dbReference type="Gene3D" id="3.30.1120.10">
    <property type="match status" value="1"/>
</dbReference>
<dbReference type="Gene3D" id="3.40.720.10">
    <property type="entry name" value="Alkaline Phosphatase, subunit A"/>
    <property type="match status" value="1"/>
</dbReference>
<dbReference type="InterPro" id="IPR017850">
    <property type="entry name" value="Alkaline_phosphatase_core_sf"/>
</dbReference>
<dbReference type="InterPro" id="IPR050738">
    <property type="entry name" value="Sulfatase"/>
</dbReference>
<dbReference type="InterPro" id="IPR024607">
    <property type="entry name" value="Sulfatase_CS"/>
</dbReference>
<dbReference type="InterPro" id="IPR000917">
    <property type="entry name" value="Sulfatase_N"/>
</dbReference>
<dbReference type="PANTHER" id="PTHR42693">
    <property type="entry name" value="ARYLSULFATASE FAMILY MEMBER"/>
    <property type="match status" value="1"/>
</dbReference>
<dbReference type="PANTHER" id="PTHR42693:SF42">
    <property type="entry name" value="ARYLSULFATASE G"/>
    <property type="match status" value="1"/>
</dbReference>
<dbReference type="Pfam" id="PF00884">
    <property type="entry name" value="Sulfatase"/>
    <property type="match status" value="1"/>
</dbReference>
<dbReference type="Pfam" id="PF14707">
    <property type="entry name" value="Sulfatase_C"/>
    <property type="match status" value="1"/>
</dbReference>
<dbReference type="SUPFAM" id="SSF53649">
    <property type="entry name" value="Alkaline phosphatase-like"/>
    <property type="match status" value="1"/>
</dbReference>
<dbReference type="PROSITE" id="PS00523">
    <property type="entry name" value="SULFATASE_1"/>
    <property type="match status" value="1"/>
</dbReference>
<dbReference type="PROSITE" id="PS00149">
    <property type="entry name" value="SULFATASE_2"/>
    <property type="match status" value="1"/>
</dbReference>
<reference key="1">
    <citation type="journal article" date="2005" name="Science">
        <title>The transcriptional landscape of the mammalian genome.</title>
        <authorList>
            <person name="Carninci P."/>
            <person name="Kasukawa T."/>
            <person name="Katayama S."/>
            <person name="Gough J."/>
            <person name="Frith M.C."/>
            <person name="Maeda N."/>
            <person name="Oyama R."/>
            <person name="Ravasi T."/>
            <person name="Lenhard B."/>
            <person name="Wells C."/>
            <person name="Kodzius R."/>
            <person name="Shimokawa K."/>
            <person name="Bajic V.B."/>
            <person name="Brenner S.E."/>
            <person name="Batalov S."/>
            <person name="Forrest A.R."/>
            <person name="Zavolan M."/>
            <person name="Davis M.J."/>
            <person name="Wilming L.G."/>
            <person name="Aidinis V."/>
            <person name="Allen J.E."/>
            <person name="Ambesi-Impiombato A."/>
            <person name="Apweiler R."/>
            <person name="Aturaliya R.N."/>
            <person name="Bailey T.L."/>
            <person name="Bansal M."/>
            <person name="Baxter L."/>
            <person name="Beisel K.W."/>
            <person name="Bersano T."/>
            <person name="Bono H."/>
            <person name="Chalk A.M."/>
            <person name="Chiu K.P."/>
            <person name="Choudhary V."/>
            <person name="Christoffels A."/>
            <person name="Clutterbuck D.R."/>
            <person name="Crowe M.L."/>
            <person name="Dalla E."/>
            <person name="Dalrymple B.P."/>
            <person name="de Bono B."/>
            <person name="Della Gatta G."/>
            <person name="di Bernardo D."/>
            <person name="Down T."/>
            <person name="Engstrom P."/>
            <person name="Fagiolini M."/>
            <person name="Faulkner G."/>
            <person name="Fletcher C.F."/>
            <person name="Fukushima T."/>
            <person name="Furuno M."/>
            <person name="Futaki S."/>
            <person name="Gariboldi M."/>
            <person name="Georgii-Hemming P."/>
            <person name="Gingeras T.R."/>
            <person name="Gojobori T."/>
            <person name="Green R.E."/>
            <person name="Gustincich S."/>
            <person name="Harbers M."/>
            <person name="Hayashi Y."/>
            <person name="Hensch T.K."/>
            <person name="Hirokawa N."/>
            <person name="Hill D."/>
            <person name="Huminiecki L."/>
            <person name="Iacono M."/>
            <person name="Ikeo K."/>
            <person name="Iwama A."/>
            <person name="Ishikawa T."/>
            <person name="Jakt M."/>
            <person name="Kanapin A."/>
            <person name="Katoh M."/>
            <person name="Kawasawa Y."/>
            <person name="Kelso J."/>
            <person name="Kitamura H."/>
            <person name="Kitano H."/>
            <person name="Kollias G."/>
            <person name="Krishnan S.P."/>
            <person name="Kruger A."/>
            <person name="Kummerfeld S.K."/>
            <person name="Kurochkin I.V."/>
            <person name="Lareau L.F."/>
            <person name="Lazarevic D."/>
            <person name="Lipovich L."/>
            <person name="Liu J."/>
            <person name="Liuni S."/>
            <person name="McWilliam S."/>
            <person name="Madan Babu M."/>
            <person name="Madera M."/>
            <person name="Marchionni L."/>
            <person name="Matsuda H."/>
            <person name="Matsuzawa S."/>
            <person name="Miki H."/>
            <person name="Mignone F."/>
            <person name="Miyake S."/>
            <person name="Morris K."/>
            <person name="Mottagui-Tabar S."/>
            <person name="Mulder N."/>
            <person name="Nakano N."/>
            <person name="Nakauchi H."/>
            <person name="Ng P."/>
            <person name="Nilsson R."/>
            <person name="Nishiguchi S."/>
            <person name="Nishikawa S."/>
            <person name="Nori F."/>
            <person name="Ohara O."/>
            <person name="Okazaki Y."/>
            <person name="Orlando V."/>
            <person name="Pang K.C."/>
            <person name="Pavan W.J."/>
            <person name="Pavesi G."/>
            <person name="Pesole G."/>
            <person name="Petrovsky N."/>
            <person name="Piazza S."/>
            <person name="Reed J."/>
            <person name="Reid J.F."/>
            <person name="Ring B.Z."/>
            <person name="Ringwald M."/>
            <person name="Rost B."/>
            <person name="Ruan Y."/>
            <person name="Salzberg S.L."/>
            <person name="Sandelin A."/>
            <person name="Schneider C."/>
            <person name="Schoenbach C."/>
            <person name="Sekiguchi K."/>
            <person name="Semple C.A."/>
            <person name="Seno S."/>
            <person name="Sessa L."/>
            <person name="Sheng Y."/>
            <person name="Shibata Y."/>
            <person name="Shimada H."/>
            <person name="Shimada K."/>
            <person name="Silva D."/>
            <person name="Sinclair B."/>
            <person name="Sperling S."/>
            <person name="Stupka E."/>
            <person name="Sugiura K."/>
            <person name="Sultana R."/>
            <person name="Takenaka Y."/>
            <person name="Taki K."/>
            <person name="Tammoja K."/>
            <person name="Tan S.L."/>
            <person name="Tang S."/>
            <person name="Taylor M.S."/>
            <person name="Tegner J."/>
            <person name="Teichmann S.A."/>
            <person name="Ueda H.R."/>
            <person name="van Nimwegen E."/>
            <person name="Verardo R."/>
            <person name="Wei C.L."/>
            <person name="Yagi K."/>
            <person name="Yamanishi H."/>
            <person name="Zabarovsky E."/>
            <person name="Zhu S."/>
            <person name="Zimmer A."/>
            <person name="Hide W."/>
            <person name="Bult C."/>
            <person name="Grimmond S.M."/>
            <person name="Teasdale R.D."/>
            <person name="Liu E.T."/>
            <person name="Brusic V."/>
            <person name="Quackenbush J."/>
            <person name="Wahlestedt C."/>
            <person name="Mattick J.S."/>
            <person name="Hume D.A."/>
            <person name="Kai C."/>
            <person name="Sasaki D."/>
            <person name="Tomaru Y."/>
            <person name="Fukuda S."/>
            <person name="Kanamori-Katayama M."/>
            <person name="Suzuki M."/>
            <person name="Aoki J."/>
            <person name="Arakawa T."/>
            <person name="Iida J."/>
            <person name="Imamura K."/>
            <person name="Itoh M."/>
            <person name="Kato T."/>
            <person name="Kawaji H."/>
            <person name="Kawagashira N."/>
            <person name="Kawashima T."/>
            <person name="Kojima M."/>
            <person name="Kondo S."/>
            <person name="Konno H."/>
            <person name="Nakano K."/>
            <person name="Ninomiya N."/>
            <person name="Nishio T."/>
            <person name="Okada M."/>
            <person name="Plessy C."/>
            <person name="Shibata K."/>
            <person name="Shiraki T."/>
            <person name="Suzuki S."/>
            <person name="Tagami M."/>
            <person name="Waki K."/>
            <person name="Watahiki A."/>
            <person name="Okamura-Oho Y."/>
            <person name="Suzuki H."/>
            <person name="Kawai J."/>
            <person name="Hayashizaki Y."/>
        </authorList>
    </citation>
    <scope>NUCLEOTIDE SEQUENCE [LARGE SCALE MRNA] (ISOFORM 1)</scope>
    <source>
        <strain>C57BL/6J</strain>
        <tissue>Medulla oblongata</tissue>
        <tissue>Visual cortex</tissue>
    </source>
</reference>
<reference key="2">
    <citation type="journal article" date="2009" name="PLoS Biol.">
        <title>Lineage-specific biology revealed by a finished genome assembly of the mouse.</title>
        <authorList>
            <person name="Church D.M."/>
            <person name="Goodstadt L."/>
            <person name="Hillier L.W."/>
            <person name="Zody M.C."/>
            <person name="Goldstein S."/>
            <person name="She X."/>
            <person name="Bult C.J."/>
            <person name="Agarwala R."/>
            <person name="Cherry J.L."/>
            <person name="DiCuccio M."/>
            <person name="Hlavina W."/>
            <person name="Kapustin Y."/>
            <person name="Meric P."/>
            <person name="Maglott D."/>
            <person name="Birtle Z."/>
            <person name="Marques A.C."/>
            <person name="Graves T."/>
            <person name="Zhou S."/>
            <person name="Teague B."/>
            <person name="Potamousis K."/>
            <person name="Churas C."/>
            <person name="Place M."/>
            <person name="Herschleb J."/>
            <person name="Runnheim R."/>
            <person name="Forrest D."/>
            <person name="Amos-Landgraf J."/>
            <person name="Schwartz D.C."/>
            <person name="Cheng Z."/>
            <person name="Lindblad-Toh K."/>
            <person name="Eichler E.E."/>
            <person name="Ponting C.P."/>
        </authorList>
    </citation>
    <scope>NUCLEOTIDE SEQUENCE [LARGE SCALE GENOMIC DNA]</scope>
    <source>
        <strain>C57BL/6J</strain>
    </source>
</reference>
<reference key="3">
    <citation type="journal article" date="2004" name="Genome Res.">
        <title>The status, quality, and expansion of the NIH full-length cDNA project: the Mammalian Gene Collection (MGC).</title>
        <authorList>
            <consortium name="The MGC Project Team"/>
        </authorList>
    </citation>
    <scope>NUCLEOTIDE SEQUENCE [LARGE SCALE MRNA] (ISOFORMS 1 AND 2)</scope>
    <source>
        <strain>C57BL/6J</strain>
        <strain>FVB/N</strain>
        <tissue>Brain</tissue>
        <tissue>Kidney</tissue>
        <tissue>Liver</tissue>
    </source>
</reference>
<reference key="4">
    <citation type="journal article" date="2004" name="DNA Res.">
        <title>Prediction of the coding sequences of mouse homologues of KIAA gene: IV. The complete nucleotide sequences of 500 mouse KIAA-homologous cDNAs identified by screening of terminal sequences of cDNA clones randomly sampled from size-fractionated libraries.</title>
        <authorList>
            <person name="Okazaki N."/>
            <person name="Kikuno R."/>
            <person name="Ohara R."/>
            <person name="Inamoto S."/>
            <person name="Koseki H."/>
            <person name="Hiraoka S."/>
            <person name="Saga Y."/>
            <person name="Seino S."/>
            <person name="Nishimura M."/>
            <person name="Kaisho T."/>
            <person name="Hoshino K."/>
            <person name="Kitamura H."/>
            <person name="Nagase T."/>
            <person name="Ohara O."/>
            <person name="Koga H."/>
        </authorList>
    </citation>
    <scope>NUCLEOTIDE SEQUENCE [LARGE SCALE MRNA] OF 14-525 (ISOFORM 1)</scope>
</reference>
<reference key="5">
    <citation type="journal article" date="2005" name="Hum. Mol. Genet.">
        <title>Sulfatases and sulfatase modifying factors: an exclusive and promiscuous relationship.</title>
        <authorList>
            <person name="Sardiello M."/>
            <person name="Annunziata I."/>
            <person name="Roma G."/>
            <person name="Ballabio A."/>
        </authorList>
    </citation>
    <scope>IDENTIFICATION</scope>
</reference>
<reference key="6">
    <citation type="journal article" date="2012" name="Proc. Natl. Acad. Sci. U.S.A.">
        <title>Arylsulfatase G inactivation causes loss of heparan sulfate 3-O-sulfatase activity and mucopolysaccharidosis in mice.</title>
        <authorList>
            <person name="Kowalewski B."/>
            <person name="Lamanna W.C."/>
            <person name="Lawrence R."/>
            <person name="Damme M."/>
            <person name="Stroobants S."/>
            <person name="Padva M."/>
            <person name="Kalus I."/>
            <person name="Frese M.A."/>
            <person name="Luebke T."/>
            <person name="Luellmann-Rauch R."/>
            <person name="D'Hooge R."/>
            <person name="Esko J.D."/>
            <person name="Dierks T."/>
        </authorList>
    </citation>
    <scope>FUNCTION</scope>
    <scope>CATALYTIC ACTIVITY</scope>
    <scope>DISRUPTION PHENOTYPE</scope>
</reference>
<reference key="7">
    <citation type="journal article" date="2014" name="J. Biol. Chem.">
        <title>Molecular characterization of arylsulfatase G: expression, processing, glycosylation, transport, and activity.</title>
        <authorList>
            <person name="Kowalewski B."/>
            <person name="Luebke T."/>
            <person name="Kollmann K."/>
            <person name="Braulke T."/>
            <person name="Reinheckel T."/>
            <person name="Dierks T."/>
            <person name="Damme M."/>
        </authorList>
    </citation>
    <scope>FUNCTION</scope>
    <scope>CATALYTIC ACTIVITY</scope>
    <scope>SUBCELLULAR LOCATION</scope>
    <scope>PROTEOLYTIC CLEAVAGE</scope>
    <scope>GLYCOSYLATION AT ASN-117; ASN-215; ASN-356 AND ASN-497</scope>
    <scope>MUTAGENESIS OF ASN-117; ASN-215; ASN-356 AND ASN-497</scope>
</reference>
<evidence type="ECO:0000250" key="1">
    <source>
        <dbReference type="UniProtKB" id="P15289"/>
    </source>
</evidence>
<evidence type="ECO:0000255" key="2"/>
<evidence type="ECO:0000269" key="3">
    <source>
    </source>
</evidence>
<evidence type="ECO:0000269" key="4">
    <source>
    </source>
</evidence>
<evidence type="ECO:0000303" key="5">
    <source>
    </source>
</evidence>
<evidence type="ECO:0000305" key="6"/>
<gene>
    <name type="primary">Arsg</name>
    <name type="synonym">Kiaa1001</name>
</gene>
<protein>
    <recommendedName>
        <fullName>Arylsulfatase G</fullName>
        <shortName>ASG</shortName>
        <ecNumber evidence="4">3.1.6.1</ecNumber>
    </recommendedName>
    <alternativeName>
        <fullName>N-sulfoglucosamine-3-sulfatase</fullName>
        <ecNumber evidence="3">3.1.6.15</ecNumber>
    </alternativeName>
</protein>
<accession>Q3TYD4</accession>
<accession>B1AT67</accession>
<accession>B1AT68</accession>
<accession>Q5XFU5</accession>
<accession>Q69ZT6</accession>
<accession>Q8CHS3</accession>
<accession>Q8VBZ5</accession>
<accession>Q9D3B4</accession>